<comment type="function">
    <text>Involved in formation of a polar tube through which the infectious agent is passed on to the host cell.</text>
</comment>
<comment type="subunit">
    <text evidence="4">Interacts with PTP1 and PTP3.</text>
</comment>
<comment type="subcellular location">
    <subcellularLocation>
        <location evidence="3">Spore polar tube</location>
    </subcellularLocation>
</comment>
<comment type="developmental stage">
    <text evidence="5">Expressed in late sporogonial stages.</text>
</comment>
<evidence type="ECO:0000255" key="1"/>
<evidence type="ECO:0000256" key="2">
    <source>
        <dbReference type="SAM" id="MobiDB-lite"/>
    </source>
</evidence>
<evidence type="ECO:0000269" key="3">
    <source>
    </source>
</evidence>
<evidence type="ECO:0000269" key="4">
    <source>
    </source>
</evidence>
<evidence type="ECO:0000269" key="5">
    <source>
    </source>
</evidence>
<proteinExistence type="evidence at protein level"/>
<reference key="1">
    <citation type="journal article" date="2001" name="Infect. Immun.">
        <title>Microsporidian invasion apparatus: identification of a novel polar tube protein and evidence for clustering of ptp1 and ptp2 genes in three Encephalitozoon species.</title>
        <authorList>
            <person name="Delbac F."/>
            <person name="Peuvel I."/>
            <person name="Metenier G."/>
            <person name="Peyretaillade E."/>
            <person name="Vivares C.P."/>
        </authorList>
    </citation>
    <scope>NUCLEOTIDE SEQUENCE [GENOMIC DNA]</scope>
    <scope>PROTEIN SEQUENCE OF 105-119</scope>
    <scope>SUBCELLULAR LOCATION</scope>
</reference>
<reference key="2">
    <citation type="patent" date="2000-01-13" number="WO0001724">
        <title>Microsporidium polar tube proteins, nucleic acids coding for said proteins and their uses.</title>
        <authorList>
            <person name="Vivares C.P."/>
            <person name="Danchin A."/>
            <person name="Delbac F."/>
        </authorList>
    </citation>
    <scope>NUCLEOTIDE SEQUENCE [GENOMIC DNA]</scope>
</reference>
<reference key="3">
    <citation type="journal article" date="2001" name="Nature">
        <title>Genome sequence and gene compaction of the eukaryote parasite Encephalitozoon cuniculi.</title>
        <authorList>
            <person name="Katinka M.D."/>
            <person name="Duprat S."/>
            <person name="Cornillot E."/>
            <person name="Metenier G."/>
            <person name="Thomarat F."/>
            <person name="Prensier G."/>
            <person name="Barbe V."/>
            <person name="Peyretaillade E."/>
            <person name="Brottier P."/>
            <person name="Wincker P."/>
            <person name="Delbac F."/>
            <person name="El Alaoui H."/>
            <person name="Peyret P."/>
            <person name="Saurin W."/>
            <person name="Gouy M."/>
            <person name="Weissenbach J."/>
            <person name="Vivares C.P."/>
        </authorList>
    </citation>
    <scope>NUCLEOTIDE SEQUENCE [LARGE SCALE GENOMIC DNA]</scope>
    <source>
        <strain>GB-M1</strain>
    </source>
</reference>
<reference key="4">
    <citation type="journal article" date="2002" name="Mol. Biochem. Parasitol.">
        <title>The microsporidian polar tube: evidence for a third polar tube protein (PTP3) in Encephalitozoon cuniculi.</title>
        <authorList>
            <person name="Peuvel I."/>
            <person name="Peyret P."/>
            <person name="Metenier G."/>
            <person name="Vivares C.P."/>
            <person name="Delbac F."/>
        </authorList>
    </citation>
    <scope>INTERACTION WITH PTP1 AND PTP3</scope>
</reference>
<reference key="5">
    <citation type="journal article" date="2006" name="Proteomics">
        <title>Proteomic analysis of the eukaryotic parasite Encephalitozoon cuniculi (microsporidia): a reference map for proteins expressed in late sporogonial stages.</title>
        <authorList>
            <person name="Brosson D."/>
            <person name="Kuhn L."/>
            <person name="Delbac F."/>
            <person name="Garin J."/>
            <person name="Vivares C.P."/>
            <person name="Texier C."/>
        </authorList>
    </citation>
    <scope>IDENTIFICATION BY MASS SPECTROMETRY [LARGE SCALE ANALYSIS]</scope>
    <scope>DEVELOPMENTAL STAGE</scope>
</reference>
<keyword id="KW-0903">Direct protein sequencing</keyword>
<keyword id="KW-0325">Glycoprotein</keyword>
<keyword id="KW-1185">Reference proteome</keyword>
<keyword id="KW-0677">Repeat</keyword>
<keyword id="KW-0732">Signal</keyword>
<keyword id="KW-0749">Sporulation</keyword>
<protein>
    <recommendedName>
        <fullName>Polar tube protein 2</fullName>
    </recommendedName>
</protein>
<gene>
    <name type="primary">PTP2</name>
    <name type="ordered locus">ECU06_0240</name>
</gene>
<organism>
    <name type="scientific">Encephalitozoon cuniculi (strain GB-M1)</name>
    <name type="common">Microsporidian parasite</name>
    <dbReference type="NCBI Taxonomy" id="284813"/>
    <lineage>
        <taxon>Eukaryota</taxon>
        <taxon>Fungi</taxon>
        <taxon>Fungi incertae sedis</taxon>
        <taxon>Microsporidia</taxon>
        <taxon>Unikaryonidae</taxon>
        <taxon>Encephalitozoon</taxon>
    </lineage>
</organism>
<accession>Q8SRT0</accession>
<sequence length="277" mass="30076">MLLLLAITAVVSATMVHPSAVVPQPAAPLHVVPPQQQMGMVNGCTSKKLEGAEIMRRNMIECQKRSSEATKAMIERANEKAVESFNKEVSKGPSQKDGGQCIEKAVQGTDRCILAGIIDKAVNKRKYRISDVENSTSLYRGDKLIALIVNVDYGLQPITKPKKKKSKIMANLPQPKREMYFNQIGQLVGARGTFPQENKEDCKPCEGPKKTVETTSEKCNLGCELKGTSALISKAIQKKEVKDTKEGEKSASQDSDGEGTAEDAEVQQPSADGEGLE</sequence>
<dbReference type="EMBL" id="AX007050">
    <property type="status" value="NOT_ANNOTATED_CDS"/>
    <property type="molecule type" value="Genomic_DNA"/>
</dbReference>
<dbReference type="EMBL" id="AL590446">
    <property type="protein sequence ID" value="CAD25384.1"/>
    <property type="molecule type" value="Genomic_DNA"/>
</dbReference>
<dbReference type="RefSeq" id="NP_585780.1">
    <property type="nucleotide sequence ID" value="NM_001041402.1"/>
</dbReference>
<dbReference type="STRING" id="284813.Q8SRT0"/>
<dbReference type="GlyCosmos" id="Q8SRT0">
    <property type="glycosylation" value="1 site, No reported glycans"/>
</dbReference>
<dbReference type="GeneID" id="859203"/>
<dbReference type="KEGG" id="ecu:ECU06_0240"/>
<dbReference type="VEuPathDB" id="MicrosporidiaDB:ECU06_0240"/>
<dbReference type="HOGENOM" id="CLU_1004828_0_0_1"/>
<dbReference type="InParanoid" id="Q8SRT0"/>
<dbReference type="OrthoDB" id="2190601at2759"/>
<dbReference type="Proteomes" id="UP000000819">
    <property type="component" value="Chromosome VI"/>
</dbReference>
<dbReference type="GO" id="GO:0044099">
    <property type="term" value="C:polar tube"/>
    <property type="evidence" value="ECO:0000314"/>
    <property type="project" value="CACAO"/>
</dbReference>
<dbReference type="GO" id="GO:0030435">
    <property type="term" value="P:sporulation resulting in formation of a cellular spore"/>
    <property type="evidence" value="ECO:0007669"/>
    <property type="project" value="UniProtKB-KW"/>
</dbReference>
<dbReference type="InterPro" id="IPR031507">
    <property type="entry name" value="PTP2"/>
</dbReference>
<dbReference type="Pfam" id="PF17022">
    <property type="entry name" value="PTP2"/>
    <property type="match status" value="1"/>
</dbReference>
<name>PTP2_ENCCU</name>
<feature type="signal peptide" evidence="1">
    <location>
        <begin position="1"/>
        <end position="18"/>
    </location>
</feature>
<feature type="chain" id="PRO_0000377525" description="Polar tube protein 2">
    <location>
        <begin position="19"/>
        <end position="277"/>
    </location>
</feature>
<feature type="region of interest" description="Disordered" evidence="2">
    <location>
        <begin position="237"/>
        <end position="277"/>
    </location>
</feature>
<feature type="compositionally biased region" description="Basic and acidic residues" evidence="2">
    <location>
        <begin position="237"/>
        <end position="251"/>
    </location>
</feature>
<feature type="compositionally biased region" description="Acidic residues" evidence="2">
    <location>
        <begin position="255"/>
        <end position="265"/>
    </location>
</feature>
<feature type="glycosylation site" description="N-linked (GlcNAc...) asparagine" evidence="1">
    <location>
        <position position="134"/>
    </location>
</feature>